<gene>
    <name evidence="1" type="primary">rpoA</name>
</gene>
<evidence type="ECO:0000255" key="1">
    <source>
        <dbReference type="HAMAP-Rule" id="MF_00059"/>
    </source>
</evidence>
<organism>
    <name type="scientific">Streptomyces granaticolor</name>
    <dbReference type="NCBI Taxonomy" id="70829"/>
    <lineage>
        <taxon>Bacteria</taxon>
        <taxon>Bacillati</taxon>
        <taxon>Actinomycetota</taxon>
        <taxon>Actinomycetes</taxon>
        <taxon>Kitasatosporales</taxon>
        <taxon>Streptomycetaceae</taxon>
        <taxon>Streptomyces</taxon>
    </lineage>
</organism>
<accession>Q9X4V6</accession>
<name>RPOA_STRGT</name>
<protein>
    <recommendedName>
        <fullName evidence="1">DNA-directed RNA polymerase subunit alpha</fullName>
        <shortName evidence="1">RNAP subunit alpha</shortName>
        <ecNumber evidence="1">2.7.7.6</ecNumber>
    </recommendedName>
    <alternativeName>
        <fullName evidence="1">RNA polymerase subunit alpha</fullName>
    </alternativeName>
    <alternativeName>
        <fullName evidence="1">Transcriptase subunit alpha</fullName>
    </alternativeName>
</protein>
<proteinExistence type="evidence at protein level"/>
<reference key="1">
    <citation type="journal article" date="2000" name="FEMS Microbiol. Lett.">
        <title>Two forms of DNA-dependent RNA polymerase alpha subunit in streptomycetes.</title>
        <authorList>
            <person name="Najmanova L."/>
            <person name="Janata J."/>
            <person name="Kalousek F."/>
            <person name="Novak P."/>
            <person name="Felsberg J."/>
            <person name="Spizek J."/>
        </authorList>
    </citation>
    <scope>NUCLEOTIDE SEQUENCE [GENOMIC DNA]</scope>
    <scope>CHARACTERIZATION</scope>
    <source>
        <strain>ETH 7437</strain>
    </source>
</reference>
<comment type="function">
    <text>DNA-dependent RNA polymerase catalyzes the transcription of DNA into RNA using the four ribonucleoside triphosphates as substrates.</text>
</comment>
<comment type="catalytic activity">
    <reaction evidence="1">
        <text>RNA(n) + a ribonucleoside 5'-triphosphate = RNA(n+1) + diphosphate</text>
        <dbReference type="Rhea" id="RHEA:21248"/>
        <dbReference type="Rhea" id="RHEA-COMP:14527"/>
        <dbReference type="Rhea" id="RHEA-COMP:17342"/>
        <dbReference type="ChEBI" id="CHEBI:33019"/>
        <dbReference type="ChEBI" id="CHEBI:61557"/>
        <dbReference type="ChEBI" id="CHEBI:140395"/>
        <dbReference type="EC" id="2.7.7.6"/>
    </reaction>
</comment>
<comment type="subunit">
    <text evidence="1">Homodimer. The RNAP catalytic core consists of 2 alpha, 1 beta, 1 beta' and 1 omega subunit. When a sigma factor is associated with the core the holoenzyme is formed, which can initiate transcription.</text>
</comment>
<comment type="domain">
    <text evidence="1">The N-terminal domain is essential for RNAP assembly and basal transcription, whereas the C-terminal domain is involved in interaction with transcriptional regulators and with upstream promoter elements.</text>
</comment>
<comment type="PTM">
    <text>The last 19 amino acids in the C-terminal part are cleaved in the spore.</text>
</comment>
<comment type="similarity">
    <text evidence="1">Belongs to the RNA polymerase alpha chain family.</text>
</comment>
<keyword id="KW-0240">DNA-directed RNA polymerase</keyword>
<keyword id="KW-0548">Nucleotidyltransferase</keyword>
<keyword id="KW-0804">Transcription</keyword>
<keyword id="KW-0808">Transferase</keyword>
<sequence>MLIAQRPSLTEEVVDEFRSRFVIEPLEPGFGYTLGNSLRRTLLSSIPGAAVTSIRIDGVLHEFTTVPGVKEDVTDLILNIKQLVVSSEHDEPVVMYLRKQGPGLVTAADIAPPAGVEVHNPDLVLATLNAKGKLEMELTVERGRGYVSAVQNKQVGQEIGRIPVDSIYSPVLKVTYKVEATRVEQRTDFDKLIVDVETKQAMRPRDAMASAGKTLVELFGLARELNIDAEGIDMGPSPTDAALAADLALPIEELELTVRSYNCLKREGIHSVGELVARSEADLLDIRNFGAKSIDEVKAKLAGMGLALKDSPPGFDPTAAADAFGADDDADAGFVETEQY</sequence>
<dbReference type="EC" id="2.7.7.6" evidence="1"/>
<dbReference type="EMBL" id="AF118449">
    <property type="protein sequence ID" value="AAD26700.1"/>
    <property type="molecule type" value="Genomic_DNA"/>
</dbReference>
<dbReference type="SMR" id="Q9X4V6"/>
<dbReference type="GO" id="GO:0005737">
    <property type="term" value="C:cytoplasm"/>
    <property type="evidence" value="ECO:0007669"/>
    <property type="project" value="UniProtKB-ARBA"/>
</dbReference>
<dbReference type="GO" id="GO:0000428">
    <property type="term" value="C:DNA-directed RNA polymerase complex"/>
    <property type="evidence" value="ECO:0007669"/>
    <property type="project" value="UniProtKB-KW"/>
</dbReference>
<dbReference type="GO" id="GO:0003677">
    <property type="term" value="F:DNA binding"/>
    <property type="evidence" value="ECO:0007669"/>
    <property type="project" value="UniProtKB-UniRule"/>
</dbReference>
<dbReference type="GO" id="GO:0003899">
    <property type="term" value="F:DNA-directed RNA polymerase activity"/>
    <property type="evidence" value="ECO:0007669"/>
    <property type="project" value="UniProtKB-UniRule"/>
</dbReference>
<dbReference type="GO" id="GO:0046983">
    <property type="term" value="F:protein dimerization activity"/>
    <property type="evidence" value="ECO:0007669"/>
    <property type="project" value="InterPro"/>
</dbReference>
<dbReference type="GO" id="GO:0006351">
    <property type="term" value="P:DNA-templated transcription"/>
    <property type="evidence" value="ECO:0007669"/>
    <property type="project" value="UniProtKB-UniRule"/>
</dbReference>
<dbReference type="CDD" id="cd06928">
    <property type="entry name" value="RNAP_alpha_NTD"/>
    <property type="match status" value="1"/>
</dbReference>
<dbReference type="FunFam" id="1.10.150.20:FF:000001">
    <property type="entry name" value="DNA-directed RNA polymerase subunit alpha"/>
    <property type="match status" value="1"/>
</dbReference>
<dbReference type="FunFam" id="2.170.120.12:FF:000001">
    <property type="entry name" value="DNA-directed RNA polymerase subunit alpha"/>
    <property type="match status" value="1"/>
</dbReference>
<dbReference type="Gene3D" id="1.10.150.20">
    <property type="entry name" value="5' to 3' exonuclease, C-terminal subdomain"/>
    <property type="match status" value="1"/>
</dbReference>
<dbReference type="Gene3D" id="2.170.120.12">
    <property type="entry name" value="DNA-directed RNA polymerase, insert domain"/>
    <property type="match status" value="1"/>
</dbReference>
<dbReference type="Gene3D" id="3.30.1360.10">
    <property type="entry name" value="RNA polymerase, RBP11-like subunit"/>
    <property type="match status" value="1"/>
</dbReference>
<dbReference type="HAMAP" id="MF_00059">
    <property type="entry name" value="RNApol_bact_RpoA"/>
    <property type="match status" value="1"/>
</dbReference>
<dbReference type="InterPro" id="IPR011262">
    <property type="entry name" value="DNA-dir_RNA_pol_insert"/>
</dbReference>
<dbReference type="InterPro" id="IPR011263">
    <property type="entry name" value="DNA-dir_RNA_pol_RpoA/D/Rpb3"/>
</dbReference>
<dbReference type="InterPro" id="IPR011773">
    <property type="entry name" value="DNA-dir_RpoA"/>
</dbReference>
<dbReference type="InterPro" id="IPR036603">
    <property type="entry name" value="RBP11-like"/>
</dbReference>
<dbReference type="InterPro" id="IPR011260">
    <property type="entry name" value="RNAP_asu_C"/>
</dbReference>
<dbReference type="InterPro" id="IPR036643">
    <property type="entry name" value="RNApol_insert_sf"/>
</dbReference>
<dbReference type="NCBIfam" id="NF003513">
    <property type="entry name" value="PRK05182.1-2"/>
    <property type="match status" value="1"/>
</dbReference>
<dbReference type="NCBIfam" id="NF003514">
    <property type="entry name" value="PRK05182.1-4"/>
    <property type="match status" value="1"/>
</dbReference>
<dbReference type="NCBIfam" id="NF003519">
    <property type="entry name" value="PRK05182.2-5"/>
    <property type="match status" value="1"/>
</dbReference>
<dbReference type="NCBIfam" id="TIGR02027">
    <property type="entry name" value="rpoA"/>
    <property type="match status" value="1"/>
</dbReference>
<dbReference type="Pfam" id="PF01000">
    <property type="entry name" value="RNA_pol_A_bac"/>
    <property type="match status" value="1"/>
</dbReference>
<dbReference type="Pfam" id="PF03118">
    <property type="entry name" value="RNA_pol_A_CTD"/>
    <property type="match status" value="1"/>
</dbReference>
<dbReference type="Pfam" id="PF01193">
    <property type="entry name" value="RNA_pol_L"/>
    <property type="match status" value="1"/>
</dbReference>
<dbReference type="SMART" id="SM00662">
    <property type="entry name" value="RPOLD"/>
    <property type="match status" value="1"/>
</dbReference>
<dbReference type="SUPFAM" id="SSF47789">
    <property type="entry name" value="C-terminal domain of RNA polymerase alpha subunit"/>
    <property type="match status" value="1"/>
</dbReference>
<dbReference type="SUPFAM" id="SSF56553">
    <property type="entry name" value="Insert subdomain of RNA polymerase alpha subunit"/>
    <property type="match status" value="1"/>
</dbReference>
<dbReference type="SUPFAM" id="SSF55257">
    <property type="entry name" value="RBP11-like subunits of RNA polymerase"/>
    <property type="match status" value="1"/>
</dbReference>
<feature type="chain" id="PRO_0000175392" description="DNA-directed RNA polymerase subunit alpha">
    <location>
        <begin position="1"/>
        <end position="340"/>
    </location>
</feature>
<feature type="region of interest" description="Alpha N-terminal domain (alpha-NTD)" evidence="1">
    <location>
        <begin position="1"/>
        <end position="226"/>
    </location>
</feature>
<feature type="region of interest" description="Alpha C-terminal domain (alpha-CTD)" evidence="1">
    <location>
        <begin position="243"/>
        <end position="340"/>
    </location>
</feature>